<dbReference type="EMBL" id="AF190125">
    <property type="protein sequence ID" value="AAF04084.1"/>
    <property type="molecule type" value="Genomic_DNA"/>
</dbReference>
<dbReference type="EMBL" id="AE004091">
    <property type="protein sequence ID" value="AAG03588.1"/>
    <property type="molecule type" value="Genomic_DNA"/>
</dbReference>
<dbReference type="PIR" id="B83620">
    <property type="entry name" value="B83620"/>
</dbReference>
<dbReference type="RefSeq" id="WP_003106175.1">
    <property type="nucleotide sequence ID" value="NZ_QZGE01000024.1"/>
</dbReference>
<dbReference type="SMR" id="Q9RMT1"/>
<dbReference type="STRING" id="208964.PA0199"/>
<dbReference type="PaxDb" id="208964-PA0199"/>
<dbReference type="KEGG" id="pae:PA0199"/>
<dbReference type="PATRIC" id="fig|208964.12.peg.207"/>
<dbReference type="PseudoCAP" id="PA0199"/>
<dbReference type="HOGENOM" id="CLU_085305_1_3_6"/>
<dbReference type="InParanoid" id="Q9RMT1"/>
<dbReference type="OrthoDB" id="9798629at2"/>
<dbReference type="PhylomeDB" id="Q9RMT1"/>
<dbReference type="BioCyc" id="PAER208964:G1FZ6-201-MONOMER"/>
<dbReference type="Proteomes" id="UP000002438">
    <property type="component" value="Chromosome"/>
</dbReference>
<dbReference type="GO" id="GO:0005886">
    <property type="term" value="C:plasma membrane"/>
    <property type="evidence" value="ECO:0000318"/>
    <property type="project" value="GO_Central"/>
</dbReference>
<dbReference type="GO" id="GO:0022857">
    <property type="term" value="F:transmembrane transporter activity"/>
    <property type="evidence" value="ECO:0007669"/>
    <property type="project" value="InterPro"/>
</dbReference>
<dbReference type="GO" id="GO:0015031">
    <property type="term" value="P:protein transport"/>
    <property type="evidence" value="ECO:0007669"/>
    <property type="project" value="UniProtKB-KW"/>
</dbReference>
<dbReference type="FunFam" id="3.30.420.270:FF:000013">
    <property type="entry name" value="Biopolymer transporter ExbD"/>
    <property type="match status" value="1"/>
</dbReference>
<dbReference type="Gene3D" id="3.30.420.270">
    <property type="match status" value="1"/>
</dbReference>
<dbReference type="InterPro" id="IPR003400">
    <property type="entry name" value="ExbD"/>
</dbReference>
<dbReference type="PANTHER" id="PTHR30558:SF12">
    <property type="entry name" value="BIOPOLYMER TRANSPORT PROTEIN EXBD"/>
    <property type="match status" value="1"/>
</dbReference>
<dbReference type="PANTHER" id="PTHR30558">
    <property type="entry name" value="EXBD MEMBRANE COMPONENT OF PMF-DRIVEN MACROMOLECULE IMPORT SYSTEM"/>
    <property type="match status" value="1"/>
</dbReference>
<dbReference type="Pfam" id="PF02472">
    <property type="entry name" value="ExbD"/>
    <property type="match status" value="1"/>
</dbReference>
<name>EXBD_PSEAE</name>
<keyword id="KW-0997">Cell inner membrane</keyword>
<keyword id="KW-1003">Cell membrane</keyword>
<keyword id="KW-0472">Membrane</keyword>
<keyword id="KW-0653">Protein transport</keyword>
<keyword id="KW-1185">Reference proteome</keyword>
<keyword id="KW-0812">Transmembrane</keyword>
<keyword id="KW-1133">Transmembrane helix</keyword>
<keyword id="KW-0813">Transport</keyword>
<proteinExistence type="inferred from homology"/>
<evidence type="ECO:0000250" key="1"/>
<evidence type="ECO:0000255" key="2"/>
<evidence type="ECO:0000305" key="3"/>
<protein>
    <recommendedName>
        <fullName>Biopolymer transport protein ExbD</fullName>
    </recommendedName>
</protein>
<sequence>MAFSTQDSDEVLSEINVTPLVDVMLVLLVVFIVTAPLLTNSIPINLPKTESVAPPEQKDPLVVSIDGAGKLFVNKDEIQPELLESNLAAAKAKDAEVRVQLQADEGVNYGQVAKAMASIERAGITRLAVITAR</sequence>
<gene>
    <name type="primary">exbD</name>
    <name type="ordered locus">PA0199</name>
</gene>
<reference key="1">
    <citation type="journal article" date="2000" name="FEMS Microbiol. Lett.">
        <title>A second tonB gene in Pseudomonas aeruginosa is linked to the exbB and exbD genes.</title>
        <authorList>
            <person name="Zhao Q."/>
            <person name="Poole K."/>
        </authorList>
    </citation>
    <scope>NUCLEOTIDE SEQUENCE [GENOMIC DNA]</scope>
    <source>
        <strain>PAO6609</strain>
    </source>
</reference>
<reference key="2">
    <citation type="journal article" date="2000" name="Nature">
        <title>Complete genome sequence of Pseudomonas aeruginosa PAO1, an opportunistic pathogen.</title>
        <authorList>
            <person name="Stover C.K."/>
            <person name="Pham X.-Q.T."/>
            <person name="Erwin A.L."/>
            <person name="Mizoguchi S.D."/>
            <person name="Warrener P."/>
            <person name="Hickey M.J."/>
            <person name="Brinkman F.S.L."/>
            <person name="Hufnagle W.O."/>
            <person name="Kowalik D.J."/>
            <person name="Lagrou M."/>
            <person name="Garber R.L."/>
            <person name="Goltry L."/>
            <person name="Tolentino E."/>
            <person name="Westbrock-Wadman S."/>
            <person name="Yuan Y."/>
            <person name="Brody L.L."/>
            <person name="Coulter S.N."/>
            <person name="Folger K.R."/>
            <person name="Kas A."/>
            <person name="Larbig K."/>
            <person name="Lim R.M."/>
            <person name="Smith K.A."/>
            <person name="Spencer D.H."/>
            <person name="Wong G.K.-S."/>
            <person name="Wu Z."/>
            <person name="Paulsen I.T."/>
            <person name="Reizer J."/>
            <person name="Saier M.H. Jr."/>
            <person name="Hancock R.E.W."/>
            <person name="Lory S."/>
            <person name="Olson M.V."/>
        </authorList>
    </citation>
    <scope>NUCLEOTIDE SEQUENCE [LARGE SCALE GENOMIC DNA]</scope>
    <source>
        <strain>ATCC 15692 / DSM 22644 / CIP 104116 / JCM 14847 / LMG 12228 / 1C / PRS 101 / PAO1</strain>
    </source>
</reference>
<comment type="function">
    <text evidence="1">Involved in the TonB-dependent energy-dependent transport of various receptor-bound substrates.</text>
</comment>
<comment type="subunit">
    <text evidence="1">The accessory proteins ExbB and ExbD seem to form a complex with TonB.</text>
</comment>
<comment type="subcellular location">
    <subcellularLocation>
        <location evidence="3">Cell inner membrane</location>
        <topology evidence="3">Single-pass type II membrane protein</topology>
    </subcellularLocation>
</comment>
<comment type="similarity">
    <text evidence="3">Belongs to the ExbD/TolR family.</text>
</comment>
<feature type="chain" id="PRO_0000287769" description="Biopolymer transport protein ExbD">
    <location>
        <begin position="1"/>
        <end position="133"/>
    </location>
</feature>
<feature type="topological domain" description="Cytoplasmic" evidence="2">
    <location>
        <begin position="1"/>
        <end position="16"/>
    </location>
</feature>
<feature type="transmembrane region" description="Helical" evidence="2">
    <location>
        <begin position="17"/>
        <end position="37"/>
    </location>
</feature>
<feature type="topological domain" description="Periplasmic" evidence="2">
    <location>
        <begin position="38"/>
        <end position="133"/>
    </location>
</feature>
<organism>
    <name type="scientific">Pseudomonas aeruginosa (strain ATCC 15692 / DSM 22644 / CIP 104116 / JCM 14847 / LMG 12228 / 1C / PRS 101 / PAO1)</name>
    <dbReference type="NCBI Taxonomy" id="208964"/>
    <lineage>
        <taxon>Bacteria</taxon>
        <taxon>Pseudomonadati</taxon>
        <taxon>Pseudomonadota</taxon>
        <taxon>Gammaproteobacteria</taxon>
        <taxon>Pseudomonadales</taxon>
        <taxon>Pseudomonadaceae</taxon>
        <taxon>Pseudomonas</taxon>
    </lineage>
</organism>
<accession>Q9RMT1</accession>
<accession>Q7DCM8</accession>